<keyword id="KW-0963">Cytoplasm</keyword>
<keyword id="KW-0378">Hydrolase</keyword>
<keyword id="KW-0645">Protease</keyword>
<keyword id="KW-1185">Reference proteome</keyword>
<keyword id="KW-0788">Thiol protease</keyword>
<keyword id="KW-0833">Ubl conjugation pathway</keyword>
<reference key="1">
    <citation type="journal article" date="2005" name="Nature">
        <title>The genome of the social amoeba Dictyostelium discoideum.</title>
        <authorList>
            <person name="Eichinger L."/>
            <person name="Pachebat J.A."/>
            <person name="Gloeckner G."/>
            <person name="Rajandream M.A."/>
            <person name="Sucgang R."/>
            <person name="Berriman M."/>
            <person name="Song J."/>
            <person name="Olsen R."/>
            <person name="Szafranski K."/>
            <person name="Xu Q."/>
            <person name="Tunggal B."/>
            <person name="Kummerfeld S."/>
            <person name="Madera M."/>
            <person name="Konfortov B.A."/>
            <person name="Rivero F."/>
            <person name="Bankier A.T."/>
            <person name="Lehmann R."/>
            <person name="Hamlin N."/>
            <person name="Davies R."/>
            <person name="Gaudet P."/>
            <person name="Fey P."/>
            <person name="Pilcher K."/>
            <person name="Chen G."/>
            <person name="Saunders D."/>
            <person name="Sodergren E.J."/>
            <person name="Davis P."/>
            <person name="Kerhornou A."/>
            <person name="Nie X."/>
            <person name="Hall N."/>
            <person name="Anjard C."/>
            <person name="Hemphill L."/>
            <person name="Bason N."/>
            <person name="Farbrother P."/>
            <person name="Desany B."/>
            <person name="Just E."/>
            <person name="Morio T."/>
            <person name="Rost R."/>
            <person name="Churcher C.M."/>
            <person name="Cooper J."/>
            <person name="Haydock S."/>
            <person name="van Driessche N."/>
            <person name="Cronin A."/>
            <person name="Goodhead I."/>
            <person name="Muzny D.M."/>
            <person name="Mourier T."/>
            <person name="Pain A."/>
            <person name="Lu M."/>
            <person name="Harper D."/>
            <person name="Lindsay R."/>
            <person name="Hauser H."/>
            <person name="James K.D."/>
            <person name="Quiles M."/>
            <person name="Madan Babu M."/>
            <person name="Saito T."/>
            <person name="Buchrieser C."/>
            <person name="Wardroper A."/>
            <person name="Felder M."/>
            <person name="Thangavelu M."/>
            <person name="Johnson D."/>
            <person name="Knights A."/>
            <person name="Loulseged H."/>
            <person name="Mungall K.L."/>
            <person name="Oliver K."/>
            <person name="Price C."/>
            <person name="Quail M.A."/>
            <person name="Urushihara H."/>
            <person name="Hernandez J."/>
            <person name="Rabbinowitsch E."/>
            <person name="Steffen D."/>
            <person name="Sanders M."/>
            <person name="Ma J."/>
            <person name="Kohara Y."/>
            <person name="Sharp S."/>
            <person name="Simmonds M.N."/>
            <person name="Spiegler S."/>
            <person name="Tivey A."/>
            <person name="Sugano S."/>
            <person name="White B."/>
            <person name="Walker D."/>
            <person name="Woodward J.R."/>
            <person name="Winckler T."/>
            <person name="Tanaka Y."/>
            <person name="Shaulsky G."/>
            <person name="Schleicher M."/>
            <person name="Weinstock G.M."/>
            <person name="Rosenthal A."/>
            <person name="Cox E.C."/>
            <person name="Chisholm R.L."/>
            <person name="Gibbs R.A."/>
            <person name="Loomis W.F."/>
            <person name="Platzer M."/>
            <person name="Kay R.R."/>
            <person name="Williams J.G."/>
            <person name="Dear P.H."/>
            <person name="Noegel A.A."/>
            <person name="Barrell B.G."/>
            <person name="Kuspa A."/>
        </authorList>
    </citation>
    <scope>NUCLEOTIDE SEQUENCE [LARGE SCALE GENOMIC DNA]</scope>
    <source>
        <strain>AX4</strain>
    </source>
</reference>
<evidence type="ECO:0000250" key="1"/>
<evidence type="ECO:0000255" key="2">
    <source>
        <dbReference type="PROSITE-ProRule" id="PRU01393"/>
    </source>
</evidence>
<evidence type="ECO:0000256" key="3">
    <source>
        <dbReference type="SAM" id="MobiDB-lite"/>
    </source>
</evidence>
<evidence type="ECO:0000305" key="4"/>
<sequence>MSVDQELIETQKNWIPLEANPEVLTTFMQSLGVSKDWEFCDIYGIDEGLLEMVPSPCVAVILLFPITNEYEDKRYKLEKEIEEKGQVLSDKVYFMKQYIGNACGTIGVIHSVLNNANVIEFNENGFFKQFLDKTTSLSTEERAISLLKNSEIEKSHEISALQGQSNVPQEDEPVVLHFVSFVHVDGHLYELDGRKPFAINHGESSAETLLKDTANVLQKMIDEDPKEIRFNLMGLVKKPNEESEEEEEKEKEETK</sequence>
<comment type="function">
    <text evidence="1">Ubiquitin-protein hydrolase is involved both in the processing of ubiquitin precursors and of ubiquitinated proteins. This enzyme is a thiol protease that recognizes and hydrolyzes a peptide bond at the C-terminal glycine of either ubiquitin or nedd8 (By similarity).</text>
</comment>
<comment type="catalytic activity">
    <reaction>
        <text>Thiol-dependent hydrolysis of ester, thioester, amide, peptide and isopeptide bonds formed by the C-terminal Gly of ubiquitin (a 76-residue protein attached to proteins as an intracellular targeting signal).</text>
        <dbReference type="EC" id="3.4.19.12"/>
    </reaction>
</comment>
<comment type="subcellular location">
    <subcellularLocation>
        <location evidence="1">Cytoplasm</location>
    </subcellularLocation>
</comment>
<comment type="similarity">
    <text evidence="4">Belongs to the peptidase C12 family.</text>
</comment>
<name>UCHL_DICDI</name>
<accession>Q54T48</accession>
<feature type="chain" id="PRO_0000331128" description="Probable ubiquitin carboxyl-terminal hydrolase">
    <location>
        <begin position="1"/>
        <end position="255"/>
    </location>
</feature>
<feature type="domain" description="UCH catalytic" evidence="2">
    <location>
        <begin position="13"/>
        <end position="237"/>
    </location>
</feature>
<feature type="region of interest" description="Interaction with ubiquitin" evidence="1">
    <location>
        <begin position="16"/>
        <end position="21"/>
    </location>
</feature>
<feature type="region of interest" description="Interaction with ubiquitin" evidence="1">
    <location>
        <begin position="227"/>
        <end position="232"/>
    </location>
</feature>
<feature type="region of interest" description="Disordered" evidence="3">
    <location>
        <begin position="235"/>
        <end position="255"/>
    </location>
</feature>
<feature type="compositionally biased region" description="Acidic residues" evidence="3">
    <location>
        <begin position="242"/>
        <end position="255"/>
    </location>
</feature>
<feature type="active site" description="Nucleophile" evidence="2">
    <location>
        <position position="103"/>
    </location>
</feature>
<feature type="active site" description="Proton donor" evidence="2">
    <location>
        <position position="177"/>
    </location>
</feature>
<feature type="site" description="Transition state stabilizer" evidence="2">
    <location>
        <position position="97"/>
    </location>
</feature>
<feature type="site" description="Important for enzyme activity" evidence="2">
    <location>
        <position position="192"/>
    </location>
</feature>
<gene>
    <name type="primary">uch1</name>
    <name type="synonym">uchl</name>
    <name type="ORF">DDB_G0282007</name>
</gene>
<protein>
    <recommendedName>
        <fullName>Probable ubiquitin carboxyl-terminal hydrolase</fullName>
        <ecNumber>3.4.19.12</ecNumber>
    </recommendedName>
    <alternativeName>
        <fullName>Ubiquitin thioesterase</fullName>
    </alternativeName>
</protein>
<organism>
    <name type="scientific">Dictyostelium discoideum</name>
    <name type="common">Social amoeba</name>
    <dbReference type="NCBI Taxonomy" id="44689"/>
    <lineage>
        <taxon>Eukaryota</taxon>
        <taxon>Amoebozoa</taxon>
        <taxon>Evosea</taxon>
        <taxon>Eumycetozoa</taxon>
        <taxon>Dictyostelia</taxon>
        <taxon>Dictyosteliales</taxon>
        <taxon>Dictyosteliaceae</taxon>
        <taxon>Dictyostelium</taxon>
    </lineage>
</organism>
<proteinExistence type="inferred from homology"/>
<dbReference type="EC" id="3.4.19.12"/>
<dbReference type="EMBL" id="AAFI02000044">
    <property type="protein sequence ID" value="EAL66425.1"/>
    <property type="molecule type" value="Genomic_DNA"/>
</dbReference>
<dbReference type="RefSeq" id="XP_640403.1">
    <property type="nucleotide sequence ID" value="XM_635311.1"/>
</dbReference>
<dbReference type="SMR" id="Q54T48"/>
<dbReference type="FunCoup" id="Q54T48">
    <property type="interactions" value="564"/>
</dbReference>
<dbReference type="STRING" id="44689.Q54T48"/>
<dbReference type="MEROPS" id="C12.A11"/>
<dbReference type="PaxDb" id="44689-DDB0304593"/>
<dbReference type="EnsemblProtists" id="EAL66425">
    <property type="protein sequence ID" value="EAL66425"/>
    <property type="gene ID" value="DDB_G0282007"/>
</dbReference>
<dbReference type="GeneID" id="8623358"/>
<dbReference type="KEGG" id="ddi:DDB_G0282007"/>
<dbReference type="dictyBase" id="DDB_G0282007">
    <property type="gene designation" value="uch1"/>
</dbReference>
<dbReference type="VEuPathDB" id="AmoebaDB:DDB_G0282007"/>
<dbReference type="eggNOG" id="KOG1415">
    <property type="taxonomic scope" value="Eukaryota"/>
</dbReference>
<dbReference type="HOGENOM" id="CLU_054406_1_1_1"/>
<dbReference type="InParanoid" id="Q54T48"/>
<dbReference type="OMA" id="IDLHYVC"/>
<dbReference type="PhylomeDB" id="Q54T48"/>
<dbReference type="Reactome" id="R-DDI-5689603">
    <property type="pathway name" value="UCH proteinases"/>
</dbReference>
<dbReference type="Reactome" id="R-DDI-8866652">
    <property type="pathway name" value="Synthesis of active ubiquitin: roles of E1 and E2 enzymes"/>
</dbReference>
<dbReference type="Reactome" id="R-DDI-8951664">
    <property type="pathway name" value="Neddylation"/>
</dbReference>
<dbReference type="PRO" id="PR:Q54T48"/>
<dbReference type="Proteomes" id="UP000002195">
    <property type="component" value="Chromosome 3"/>
</dbReference>
<dbReference type="GO" id="GO:0005737">
    <property type="term" value="C:cytoplasm"/>
    <property type="evidence" value="ECO:0000318"/>
    <property type="project" value="GO_Central"/>
</dbReference>
<dbReference type="GO" id="GO:0004843">
    <property type="term" value="F:cysteine-type deubiquitinase activity"/>
    <property type="evidence" value="ECO:0000318"/>
    <property type="project" value="GO_Central"/>
</dbReference>
<dbReference type="GO" id="GO:0030163">
    <property type="term" value="P:protein catabolic process"/>
    <property type="evidence" value="ECO:0000318"/>
    <property type="project" value="GO_Central"/>
</dbReference>
<dbReference type="GO" id="GO:0006511">
    <property type="term" value="P:ubiquitin-dependent protein catabolic process"/>
    <property type="evidence" value="ECO:0007669"/>
    <property type="project" value="InterPro"/>
</dbReference>
<dbReference type="CDD" id="cd09616">
    <property type="entry name" value="Peptidase_C12_UCH_L1_L3"/>
    <property type="match status" value="1"/>
</dbReference>
<dbReference type="FunFam" id="3.40.532.10:FF:000006">
    <property type="entry name" value="Ubiquitin carboxyl-terminal hydrolase"/>
    <property type="match status" value="1"/>
</dbReference>
<dbReference type="Gene3D" id="3.40.532.10">
    <property type="entry name" value="Peptidase C12, ubiquitin carboxyl-terminal hydrolase"/>
    <property type="match status" value="1"/>
</dbReference>
<dbReference type="InterPro" id="IPR038765">
    <property type="entry name" value="Papain-like_cys_pep_sf"/>
</dbReference>
<dbReference type="InterPro" id="IPR001578">
    <property type="entry name" value="Peptidase_C12_UCH"/>
</dbReference>
<dbReference type="InterPro" id="IPR036959">
    <property type="entry name" value="Peptidase_C12_UCH_sf"/>
</dbReference>
<dbReference type="PANTHER" id="PTHR10589">
    <property type="entry name" value="UBIQUITIN CARBOXYL-TERMINAL HYDROLASE"/>
    <property type="match status" value="1"/>
</dbReference>
<dbReference type="PANTHER" id="PTHR10589:SF17">
    <property type="entry name" value="UBIQUITIN CARBOXYL-TERMINAL HYDROLASE"/>
    <property type="match status" value="1"/>
</dbReference>
<dbReference type="Pfam" id="PF01088">
    <property type="entry name" value="Peptidase_C12"/>
    <property type="match status" value="1"/>
</dbReference>
<dbReference type="PRINTS" id="PR00707">
    <property type="entry name" value="UBCTHYDRLASE"/>
</dbReference>
<dbReference type="SUPFAM" id="SSF54001">
    <property type="entry name" value="Cysteine proteinases"/>
    <property type="match status" value="1"/>
</dbReference>
<dbReference type="PROSITE" id="PS52048">
    <property type="entry name" value="UCH_DOMAIN"/>
    <property type="match status" value="1"/>
</dbReference>